<feature type="chain" id="PRO_1000211711" description="Large ribosomal subunit protein bL35">
    <location>
        <begin position="1"/>
        <end position="64"/>
    </location>
</feature>
<organism>
    <name type="scientific">Pseudomonas fluorescens (strain SBW25)</name>
    <dbReference type="NCBI Taxonomy" id="216595"/>
    <lineage>
        <taxon>Bacteria</taxon>
        <taxon>Pseudomonadati</taxon>
        <taxon>Pseudomonadota</taxon>
        <taxon>Gammaproteobacteria</taxon>
        <taxon>Pseudomonadales</taxon>
        <taxon>Pseudomonadaceae</taxon>
        <taxon>Pseudomonas</taxon>
    </lineage>
</organism>
<proteinExistence type="inferred from homology"/>
<evidence type="ECO:0000255" key="1">
    <source>
        <dbReference type="HAMAP-Rule" id="MF_00514"/>
    </source>
</evidence>
<evidence type="ECO:0000305" key="2"/>
<accession>C3JZN5</accession>
<reference key="1">
    <citation type="journal article" date="2009" name="Genome Biol.">
        <title>Genomic and genetic analyses of diversity and plant interactions of Pseudomonas fluorescens.</title>
        <authorList>
            <person name="Silby M.W."/>
            <person name="Cerdeno-Tarraga A.M."/>
            <person name="Vernikos G.S."/>
            <person name="Giddens S.R."/>
            <person name="Jackson R.W."/>
            <person name="Preston G.M."/>
            <person name="Zhang X.-X."/>
            <person name="Moon C.D."/>
            <person name="Gehrig S.M."/>
            <person name="Godfrey S.A.C."/>
            <person name="Knight C.G."/>
            <person name="Malone J.G."/>
            <person name="Robinson Z."/>
            <person name="Spiers A.J."/>
            <person name="Harris S."/>
            <person name="Challis G.L."/>
            <person name="Yaxley A.M."/>
            <person name="Harris D."/>
            <person name="Seeger K."/>
            <person name="Murphy L."/>
            <person name="Rutter S."/>
            <person name="Squares R."/>
            <person name="Quail M.A."/>
            <person name="Saunders E."/>
            <person name="Mavromatis K."/>
            <person name="Brettin T.S."/>
            <person name="Bentley S.D."/>
            <person name="Hothersall J."/>
            <person name="Stephens E."/>
            <person name="Thomas C.M."/>
            <person name="Parkhill J."/>
            <person name="Levy S.B."/>
            <person name="Rainey P.B."/>
            <person name="Thomson N.R."/>
        </authorList>
    </citation>
    <scope>NUCLEOTIDE SEQUENCE [LARGE SCALE GENOMIC DNA]</scope>
    <source>
        <strain>SBW25</strain>
    </source>
</reference>
<comment type="similarity">
    <text evidence="1">Belongs to the bacterial ribosomal protein bL35 family.</text>
</comment>
<sequence>MPKMKTKSGAAKRFLKTANGIKHKHAFKSHILTKMSTKRKRQLRGSSLLHPSDVAKVERMLRLR</sequence>
<keyword id="KW-0687">Ribonucleoprotein</keyword>
<keyword id="KW-0689">Ribosomal protein</keyword>
<name>RL35_PSEFS</name>
<protein>
    <recommendedName>
        <fullName evidence="1">Large ribosomal subunit protein bL35</fullName>
    </recommendedName>
    <alternativeName>
        <fullName evidence="2">50S ribosomal protein L35</fullName>
    </alternativeName>
</protein>
<dbReference type="EMBL" id="AM181176">
    <property type="protein sequence ID" value="CAY50641.1"/>
    <property type="molecule type" value="Genomic_DNA"/>
</dbReference>
<dbReference type="RefSeq" id="WP_002553160.1">
    <property type="nucleotide sequence ID" value="NC_012660.1"/>
</dbReference>
<dbReference type="SMR" id="C3JZN5"/>
<dbReference type="STRING" id="294.SRM1_02091"/>
<dbReference type="GeneID" id="98112259"/>
<dbReference type="eggNOG" id="COG0291">
    <property type="taxonomic scope" value="Bacteria"/>
</dbReference>
<dbReference type="HOGENOM" id="CLU_169643_1_1_6"/>
<dbReference type="OrthoDB" id="47476at2"/>
<dbReference type="GO" id="GO:0022625">
    <property type="term" value="C:cytosolic large ribosomal subunit"/>
    <property type="evidence" value="ECO:0007669"/>
    <property type="project" value="TreeGrafter"/>
</dbReference>
<dbReference type="GO" id="GO:0003735">
    <property type="term" value="F:structural constituent of ribosome"/>
    <property type="evidence" value="ECO:0007669"/>
    <property type="project" value="InterPro"/>
</dbReference>
<dbReference type="GO" id="GO:0006412">
    <property type="term" value="P:translation"/>
    <property type="evidence" value="ECO:0007669"/>
    <property type="project" value="UniProtKB-UniRule"/>
</dbReference>
<dbReference type="FunFam" id="4.10.410.60:FF:000001">
    <property type="entry name" value="50S ribosomal protein L35"/>
    <property type="match status" value="1"/>
</dbReference>
<dbReference type="Gene3D" id="4.10.410.60">
    <property type="match status" value="1"/>
</dbReference>
<dbReference type="HAMAP" id="MF_00514">
    <property type="entry name" value="Ribosomal_bL35"/>
    <property type="match status" value="1"/>
</dbReference>
<dbReference type="InterPro" id="IPR001706">
    <property type="entry name" value="Ribosomal_bL35"/>
</dbReference>
<dbReference type="InterPro" id="IPR021137">
    <property type="entry name" value="Ribosomal_bL35-like"/>
</dbReference>
<dbReference type="InterPro" id="IPR018265">
    <property type="entry name" value="Ribosomal_bL35_CS"/>
</dbReference>
<dbReference type="InterPro" id="IPR037229">
    <property type="entry name" value="Ribosomal_bL35_sf"/>
</dbReference>
<dbReference type="NCBIfam" id="TIGR00001">
    <property type="entry name" value="rpmI_bact"/>
    <property type="match status" value="1"/>
</dbReference>
<dbReference type="PANTHER" id="PTHR33343">
    <property type="entry name" value="54S RIBOSOMAL PROTEIN BL35M"/>
    <property type="match status" value="1"/>
</dbReference>
<dbReference type="PANTHER" id="PTHR33343:SF1">
    <property type="entry name" value="LARGE RIBOSOMAL SUBUNIT PROTEIN BL35M"/>
    <property type="match status" value="1"/>
</dbReference>
<dbReference type="Pfam" id="PF01632">
    <property type="entry name" value="Ribosomal_L35p"/>
    <property type="match status" value="1"/>
</dbReference>
<dbReference type="PRINTS" id="PR00064">
    <property type="entry name" value="RIBOSOMALL35"/>
</dbReference>
<dbReference type="SUPFAM" id="SSF143034">
    <property type="entry name" value="L35p-like"/>
    <property type="match status" value="1"/>
</dbReference>
<dbReference type="PROSITE" id="PS00936">
    <property type="entry name" value="RIBOSOMAL_L35"/>
    <property type="match status" value="1"/>
</dbReference>
<gene>
    <name evidence="1" type="primary">rpmI</name>
    <name type="ordered locus">PFLU_4146</name>
</gene>